<dbReference type="EC" id="6.3.2.8" evidence="1"/>
<dbReference type="EMBL" id="CP000568">
    <property type="protein sequence ID" value="ABN53825.1"/>
    <property type="molecule type" value="Genomic_DNA"/>
</dbReference>
<dbReference type="RefSeq" id="WP_003512921.1">
    <property type="nucleotide sequence ID" value="NC_009012.1"/>
</dbReference>
<dbReference type="SMR" id="A3DIP6"/>
<dbReference type="STRING" id="203119.Cthe_2626"/>
<dbReference type="GeneID" id="35805501"/>
<dbReference type="KEGG" id="cth:Cthe_2626"/>
<dbReference type="eggNOG" id="COG0773">
    <property type="taxonomic scope" value="Bacteria"/>
</dbReference>
<dbReference type="HOGENOM" id="CLU_028104_1_0_9"/>
<dbReference type="OrthoDB" id="9804126at2"/>
<dbReference type="UniPathway" id="UPA00219"/>
<dbReference type="Proteomes" id="UP000002145">
    <property type="component" value="Chromosome"/>
</dbReference>
<dbReference type="GO" id="GO:0005737">
    <property type="term" value="C:cytoplasm"/>
    <property type="evidence" value="ECO:0007669"/>
    <property type="project" value="UniProtKB-SubCell"/>
</dbReference>
<dbReference type="GO" id="GO:0005524">
    <property type="term" value="F:ATP binding"/>
    <property type="evidence" value="ECO:0007669"/>
    <property type="project" value="UniProtKB-UniRule"/>
</dbReference>
<dbReference type="GO" id="GO:0008763">
    <property type="term" value="F:UDP-N-acetylmuramate-L-alanine ligase activity"/>
    <property type="evidence" value="ECO:0007669"/>
    <property type="project" value="UniProtKB-UniRule"/>
</dbReference>
<dbReference type="GO" id="GO:0051301">
    <property type="term" value="P:cell division"/>
    <property type="evidence" value="ECO:0007669"/>
    <property type="project" value="UniProtKB-KW"/>
</dbReference>
<dbReference type="GO" id="GO:0071555">
    <property type="term" value="P:cell wall organization"/>
    <property type="evidence" value="ECO:0007669"/>
    <property type="project" value="UniProtKB-KW"/>
</dbReference>
<dbReference type="GO" id="GO:0009252">
    <property type="term" value="P:peptidoglycan biosynthetic process"/>
    <property type="evidence" value="ECO:0007669"/>
    <property type="project" value="UniProtKB-UniRule"/>
</dbReference>
<dbReference type="GO" id="GO:0008360">
    <property type="term" value="P:regulation of cell shape"/>
    <property type="evidence" value="ECO:0007669"/>
    <property type="project" value="UniProtKB-KW"/>
</dbReference>
<dbReference type="Gene3D" id="3.90.190.20">
    <property type="entry name" value="Mur ligase, C-terminal domain"/>
    <property type="match status" value="1"/>
</dbReference>
<dbReference type="Gene3D" id="3.40.1190.10">
    <property type="entry name" value="Mur-like, catalytic domain"/>
    <property type="match status" value="1"/>
</dbReference>
<dbReference type="Gene3D" id="3.40.50.720">
    <property type="entry name" value="NAD(P)-binding Rossmann-like Domain"/>
    <property type="match status" value="1"/>
</dbReference>
<dbReference type="HAMAP" id="MF_00046">
    <property type="entry name" value="MurC"/>
    <property type="match status" value="1"/>
</dbReference>
<dbReference type="InterPro" id="IPR036565">
    <property type="entry name" value="Mur-like_cat_sf"/>
</dbReference>
<dbReference type="InterPro" id="IPR004101">
    <property type="entry name" value="Mur_ligase_C"/>
</dbReference>
<dbReference type="InterPro" id="IPR036615">
    <property type="entry name" value="Mur_ligase_C_dom_sf"/>
</dbReference>
<dbReference type="InterPro" id="IPR013221">
    <property type="entry name" value="Mur_ligase_cen"/>
</dbReference>
<dbReference type="InterPro" id="IPR000713">
    <property type="entry name" value="Mur_ligase_N"/>
</dbReference>
<dbReference type="InterPro" id="IPR050061">
    <property type="entry name" value="MurCDEF_pg_biosynth"/>
</dbReference>
<dbReference type="InterPro" id="IPR005758">
    <property type="entry name" value="UDP-N-AcMur_Ala_ligase_MurC"/>
</dbReference>
<dbReference type="NCBIfam" id="TIGR01082">
    <property type="entry name" value="murC"/>
    <property type="match status" value="1"/>
</dbReference>
<dbReference type="PANTHER" id="PTHR43445:SF3">
    <property type="entry name" value="UDP-N-ACETYLMURAMATE--L-ALANINE LIGASE"/>
    <property type="match status" value="1"/>
</dbReference>
<dbReference type="PANTHER" id="PTHR43445">
    <property type="entry name" value="UDP-N-ACETYLMURAMATE--L-ALANINE LIGASE-RELATED"/>
    <property type="match status" value="1"/>
</dbReference>
<dbReference type="Pfam" id="PF01225">
    <property type="entry name" value="Mur_ligase"/>
    <property type="match status" value="1"/>
</dbReference>
<dbReference type="Pfam" id="PF02875">
    <property type="entry name" value="Mur_ligase_C"/>
    <property type="match status" value="1"/>
</dbReference>
<dbReference type="Pfam" id="PF08245">
    <property type="entry name" value="Mur_ligase_M"/>
    <property type="match status" value="1"/>
</dbReference>
<dbReference type="SUPFAM" id="SSF51984">
    <property type="entry name" value="MurCD N-terminal domain"/>
    <property type="match status" value="1"/>
</dbReference>
<dbReference type="SUPFAM" id="SSF53623">
    <property type="entry name" value="MurD-like peptide ligases, catalytic domain"/>
    <property type="match status" value="1"/>
</dbReference>
<dbReference type="SUPFAM" id="SSF53244">
    <property type="entry name" value="MurD-like peptide ligases, peptide-binding domain"/>
    <property type="match status" value="1"/>
</dbReference>
<proteinExistence type="inferred from homology"/>
<protein>
    <recommendedName>
        <fullName evidence="1">UDP-N-acetylmuramate--L-alanine ligase</fullName>
        <ecNumber evidence="1">6.3.2.8</ecNumber>
    </recommendedName>
    <alternativeName>
        <fullName evidence="1">UDP-N-acetylmuramoyl-L-alanine synthetase</fullName>
    </alternativeName>
</protein>
<name>MURC_ACET2</name>
<keyword id="KW-0067">ATP-binding</keyword>
<keyword id="KW-0131">Cell cycle</keyword>
<keyword id="KW-0132">Cell division</keyword>
<keyword id="KW-0133">Cell shape</keyword>
<keyword id="KW-0961">Cell wall biogenesis/degradation</keyword>
<keyword id="KW-0963">Cytoplasm</keyword>
<keyword id="KW-0436">Ligase</keyword>
<keyword id="KW-0547">Nucleotide-binding</keyword>
<keyword id="KW-0573">Peptidoglycan synthesis</keyword>
<keyword id="KW-1185">Reference proteome</keyword>
<accession>A3DIP6</accession>
<organism>
    <name type="scientific">Acetivibrio thermocellus (strain ATCC 27405 / DSM 1237 / JCM 9322 / NBRC 103400 / NCIMB 10682 / NRRL B-4536 / VPI 7372)</name>
    <name type="common">Clostridium thermocellum</name>
    <dbReference type="NCBI Taxonomy" id="203119"/>
    <lineage>
        <taxon>Bacteria</taxon>
        <taxon>Bacillati</taxon>
        <taxon>Bacillota</taxon>
        <taxon>Clostridia</taxon>
        <taxon>Eubacteriales</taxon>
        <taxon>Oscillospiraceae</taxon>
        <taxon>Acetivibrio</taxon>
    </lineage>
</organism>
<reference key="1">
    <citation type="submission" date="2007-02" db="EMBL/GenBank/DDBJ databases">
        <title>Complete sequence of Clostridium thermocellum ATCC 27405.</title>
        <authorList>
            <consortium name="US DOE Joint Genome Institute"/>
            <person name="Copeland A."/>
            <person name="Lucas S."/>
            <person name="Lapidus A."/>
            <person name="Barry K."/>
            <person name="Detter J.C."/>
            <person name="Glavina del Rio T."/>
            <person name="Hammon N."/>
            <person name="Israni S."/>
            <person name="Dalin E."/>
            <person name="Tice H."/>
            <person name="Pitluck S."/>
            <person name="Chertkov O."/>
            <person name="Brettin T."/>
            <person name="Bruce D."/>
            <person name="Han C."/>
            <person name="Tapia R."/>
            <person name="Gilna P."/>
            <person name="Schmutz J."/>
            <person name="Larimer F."/>
            <person name="Land M."/>
            <person name="Hauser L."/>
            <person name="Kyrpides N."/>
            <person name="Mikhailova N."/>
            <person name="Wu J.H.D."/>
            <person name="Newcomb M."/>
            <person name="Richardson P."/>
        </authorList>
    </citation>
    <scope>NUCLEOTIDE SEQUENCE [LARGE SCALE GENOMIC DNA]</scope>
    <source>
        <strain>ATCC 27405 / DSM 1237 / JCM 9322 / NBRC 103400 / NCIMB 10682 / NRRL B-4536 / VPI 7372</strain>
    </source>
</reference>
<comment type="function">
    <text evidence="1">Cell wall formation.</text>
</comment>
<comment type="catalytic activity">
    <reaction evidence="1">
        <text>UDP-N-acetyl-alpha-D-muramate + L-alanine + ATP = UDP-N-acetyl-alpha-D-muramoyl-L-alanine + ADP + phosphate + H(+)</text>
        <dbReference type="Rhea" id="RHEA:23372"/>
        <dbReference type="ChEBI" id="CHEBI:15378"/>
        <dbReference type="ChEBI" id="CHEBI:30616"/>
        <dbReference type="ChEBI" id="CHEBI:43474"/>
        <dbReference type="ChEBI" id="CHEBI:57972"/>
        <dbReference type="ChEBI" id="CHEBI:70757"/>
        <dbReference type="ChEBI" id="CHEBI:83898"/>
        <dbReference type="ChEBI" id="CHEBI:456216"/>
        <dbReference type="EC" id="6.3.2.8"/>
    </reaction>
</comment>
<comment type="pathway">
    <text evidence="1">Cell wall biogenesis; peptidoglycan biosynthesis.</text>
</comment>
<comment type="subcellular location">
    <subcellularLocation>
        <location evidence="1">Cytoplasm</location>
    </subcellularLocation>
</comment>
<comment type="similarity">
    <text evidence="1">Belongs to the MurCDEF family.</text>
</comment>
<evidence type="ECO:0000255" key="1">
    <source>
        <dbReference type="HAMAP-Rule" id="MF_00046"/>
    </source>
</evidence>
<gene>
    <name evidence="1" type="primary">murC</name>
    <name type="ordered locus">Cthe_2626</name>
</gene>
<feature type="chain" id="PRO_0000336827" description="UDP-N-acetylmuramate--L-alanine ligase">
    <location>
        <begin position="1"/>
        <end position="469"/>
    </location>
</feature>
<feature type="binding site" evidence="1">
    <location>
        <begin position="120"/>
        <end position="126"/>
    </location>
    <ligand>
        <name>ATP</name>
        <dbReference type="ChEBI" id="CHEBI:30616"/>
    </ligand>
</feature>
<sequence>MEQLSILDPNKFKHVHFIGIGGISMSGLAEILLNLGFTVSGSDIRSSNITSKLEKKGIKIYTGHSEENIKDADLVVYTAAVKSDNPELAKAKSLGIPTLDRATLLGEIMKKYPFSVAVSGTHGKTTTTSMISLIMLKSALDPTIHIGGELDAIGGNTRIGSNKYFVAEACEYVESFLKFHPYLAVVLNIEADHLDYFKDIEHIKNAFLKFIRLVPENGYVVACADDQNVLSILKDVHCNIITFGLNSKNAMWTAEDISFNENGFAAFTVLKDNERITNIQLKVPGIHNISNALASIAACYALGCSIENIKKGLESYTGIHRRFELKGIENNIKVVDDYAHHPSEIKATLKAARSGNYPRIWTVFQPHTYTRTKFLLDEFSKAFKDTDKVIITDIYSAREKDTGEIHSRILAEKIRENGQDAIYLPDFEGIVEYLKKNASPGDLIITMGAGDVYKVGEMFLKDKQMVAVS</sequence>